<dbReference type="EC" id="2.3.1.16" evidence="1"/>
<dbReference type="EMBL" id="CP000446">
    <property type="protein sequence ID" value="ABI38485.1"/>
    <property type="molecule type" value="Genomic_DNA"/>
</dbReference>
<dbReference type="RefSeq" id="WP_011622190.1">
    <property type="nucleotide sequence ID" value="NC_008321.1"/>
</dbReference>
<dbReference type="SMR" id="Q0HKD2"/>
<dbReference type="GeneID" id="94727450"/>
<dbReference type="KEGG" id="she:Shewmr4_1407"/>
<dbReference type="HOGENOM" id="CLU_031026_2_0_6"/>
<dbReference type="UniPathway" id="UPA00659"/>
<dbReference type="GO" id="GO:0005829">
    <property type="term" value="C:cytosol"/>
    <property type="evidence" value="ECO:0007669"/>
    <property type="project" value="TreeGrafter"/>
</dbReference>
<dbReference type="GO" id="GO:0003988">
    <property type="term" value="F:acetyl-CoA C-acyltransferase activity"/>
    <property type="evidence" value="ECO:0007669"/>
    <property type="project" value="UniProtKB-UniRule"/>
</dbReference>
<dbReference type="GO" id="GO:0006635">
    <property type="term" value="P:fatty acid beta-oxidation"/>
    <property type="evidence" value="ECO:0007669"/>
    <property type="project" value="UniProtKB-UniRule"/>
</dbReference>
<dbReference type="CDD" id="cd00751">
    <property type="entry name" value="thiolase"/>
    <property type="match status" value="1"/>
</dbReference>
<dbReference type="FunFam" id="3.40.47.10:FF:000011">
    <property type="entry name" value="3-ketoacyl-CoA thiolase"/>
    <property type="match status" value="1"/>
</dbReference>
<dbReference type="Gene3D" id="3.40.47.10">
    <property type="match status" value="1"/>
</dbReference>
<dbReference type="HAMAP" id="MF_01618">
    <property type="entry name" value="FadI"/>
    <property type="match status" value="1"/>
</dbReference>
<dbReference type="InterPro" id="IPR012806">
    <property type="entry name" value="Ac-CoA_C-AcTrfase_FadI"/>
</dbReference>
<dbReference type="InterPro" id="IPR002155">
    <property type="entry name" value="Thiolase"/>
</dbReference>
<dbReference type="InterPro" id="IPR016039">
    <property type="entry name" value="Thiolase-like"/>
</dbReference>
<dbReference type="InterPro" id="IPR020610">
    <property type="entry name" value="Thiolase_AS"/>
</dbReference>
<dbReference type="InterPro" id="IPR020617">
    <property type="entry name" value="Thiolase_C"/>
</dbReference>
<dbReference type="InterPro" id="IPR020613">
    <property type="entry name" value="Thiolase_CS"/>
</dbReference>
<dbReference type="InterPro" id="IPR020616">
    <property type="entry name" value="Thiolase_N"/>
</dbReference>
<dbReference type="NCBIfam" id="TIGR01930">
    <property type="entry name" value="AcCoA-C-Actrans"/>
    <property type="match status" value="1"/>
</dbReference>
<dbReference type="NCBIfam" id="TIGR02446">
    <property type="entry name" value="FadI"/>
    <property type="match status" value="1"/>
</dbReference>
<dbReference type="NCBIfam" id="NF006516">
    <property type="entry name" value="PRK08963.1"/>
    <property type="match status" value="1"/>
</dbReference>
<dbReference type="PANTHER" id="PTHR18919:SF107">
    <property type="entry name" value="ACETYL-COA ACETYLTRANSFERASE, CYTOSOLIC"/>
    <property type="match status" value="1"/>
</dbReference>
<dbReference type="PANTHER" id="PTHR18919">
    <property type="entry name" value="ACETYL-COA C-ACYLTRANSFERASE"/>
    <property type="match status" value="1"/>
</dbReference>
<dbReference type="Pfam" id="PF02803">
    <property type="entry name" value="Thiolase_C"/>
    <property type="match status" value="1"/>
</dbReference>
<dbReference type="Pfam" id="PF00108">
    <property type="entry name" value="Thiolase_N"/>
    <property type="match status" value="1"/>
</dbReference>
<dbReference type="PIRSF" id="PIRSF000429">
    <property type="entry name" value="Ac-CoA_Ac_transf"/>
    <property type="match status" value="1"/>
</dbReference>
<dbReference type="SUPFAM" id="SSF53901">
    <property type="entry name" value="Thiolase-like"/>
    <property type="match status" value="2"/>
</dbReference>
<dbReference type="PROSITE" id="PS00737">
    <property type="entry name" value="THIOLASE_2"/>
    <property type="match status" value="1"/>
</dbReference>
<dbReference type="PROSITE" id="PS00099">
    <property type="entry name" value="THIOLASE_3"/>
    <property type="match status" value="1"/>
</dbReference>
<feature type="chain" id="PRO_1000069514" description="3-ketoacyl-CoA thiolase">
    <location>
        <begin position="1"/>
        <end position="436"/>
    </location>
</feature>
<feature type="active site" description="Acyl-thioester intermediate" evidence="1">
    <location>
        <position position="99"/>
    </location>
</feature>
<feature type="active site" description="Proton acceptor" evidence="1">
    <location>
        <position position="392"/>
    </location>
</feature>
<feature type="active site" description="Proton acceptor" evidence="1">
    <location>
        <position position="422"/>
    </location>
</feature>
<sequence>MSDRQQVTNAKGERIAIVAGLRTPFAKQATAFHGVSALDMGKMVVNELLARSELDPKLIEQLVYGQVVQMPAAPNIAREIVLGTGMDVSTDAYSVTRACATSFQSAVNVAESIMTGNIEIGIAGGADSSSVLPIGVSKKLAHALVDLNKARSFGQKLQIFRRLGIKDLLPVPPAVAEYSTGLSMGQTAEQMAKTYNISRADQDALAHRSHTLASETWASGHLRDEVMVAHVPPYKQFIERDNNIRENSDLSSYAKLRPAFDKKHGSVTAANSTPLTDGASAIILMSEGRAKALGYQPIGYIKSYAFTAIDVWQDMLMGPSYATPLALKRAGMELEDLTLIEMHEAFAAQTLANMQMFASKKFAEEKLGRNRAIGEIDMSKFNVLGGSLAYGHPFAATGTRLITQVCRELKRRGGGTGLATACAAGGLGAAMIVEVE</sequence>
<gene>
    <name evidence="1" type="primary">fadI</name>
    <name type="ordered locus">Shewmr4_1407</name>
</gene>
<accession>Q0HKD2</accession>
<keyword id="KW-0012">Acyltransferase</keyword>
<keyword id="KW-0963">Cytoplasm</keyword>
<keyword id="KW-0276">Fatty acid metabolism</keyword>
<keyword id="KW-0442">Lipid degradation</keyword>
<keyword id="KW-0443">Lipid metabolism</keyword>
<keyword id="KW-0808">Transferase</keyword>
<name>FADI_SHESM</name>
<protein>
    <recommendedName>
        <fullName evidence="1">3-ketoacyl-CoA thiolase</fullName>
        <ecNumber evidence="1">2.3.1.16</ecNumber>
    </recommendedName>
    <alternativeName>
        <fullName evidence="1">ACSs</fullName>
    </alternativeName>
    <alternativeName>
        <fullName evidence="1">Acetyl-CoA acyltransferase</fullName>
    </alternativeName>
    <alternativeName>
        <fullName evidence="1">Acyl-CoA ligase</fullName>
    </alternativeName>
    <alternativeName>
        <fullName evidence="1">Beta-ketothiolase</fullName>
    </alternativeName>
    <alternativeName>
        <fullName evidence="1">Fatty acid oxidation complex subunit beta</fullName>
    </alternativeName>
</protein>
<comment type="function">
    <text evidence="1">Catalyzes the final step of fatty acid oxidation in which acetyl-CoA is released and the CoA ester of a fatty acid two carbons shorter is formed.</text>
</comment>
<comment type="catalytic activity">
    <reaction evidence="1">
        <text>an acyl-CoA + acetyl-CoA = a 3-oxoacyl-CoA + CoA</text>
        <dbReference type="Rhea" id="RHEA:21564"/>
        <dbReference type="ChEBI" id="CHEBI:57287"/>
        <dbReference type="ChEBI" id="CHEBI:57288"/>
        <dbReference type="ChEBI" id="CHEBI:58342"/>
        <dbReference type="ChEBI" id="CHEBI:90726"/>
        <dbReference type="EC" id="2.3.1.16"/>
    </reaction>
</comment>
<comment type="pathway">
    <text evidence="1">Lipid metabolism; fatty acid beta-oxidation.</text>
</comment>
<comment type="subunit">
    <text evidence="1">Heterotetramer of two alpha chains (FadJ) and two beta chains (FadI).</text>
</comment>
<comment type="subcellular location">
    <subcellularLocation>
        <location evidence="1">Cytoplasm</location>
    </subcellularLocation>
</comment>
<comment type="similarity">
    <text evidence="1">Belongs to the thiolase-like superfamily. Thiolase family.</text>
</comment>
<reference key="1">
    <citation type="submission" date="2006-08" db="EMBL/GenBank/DDBJ databases">
        <title>Complete sequence of Shewanella sp. MR-4.</title>
        <authorList>
            <consortium name="US DOE Joint Genome Institute"/>
            <person name="Copeland A."/>
            <person name="Lucas S."/>
            <person name="Lapidus A."/>
            <person name="Barry K."/>
            <person name="Detter J.C."/>
            <person name="Glavina del Rio T."/>
            <person name="Hammon N."/>
            <person name="Israni S."/>
            <person name="Dalin E."/>
            <person name="Tice H."/>
            <person name="Pitluck S."/>
            <person name="Kiss H."/>
            <person name="Brettin T."/>
            <person name="Bruce D."/>
            <person name="Han C."/>
            <person name="Tapia R."/>
            <person name="Gilna P."/>
            <person name="Schmutz J."/>
            <person name="Larimer F."/>
            <person name="Land M."/>
            <person name="Hauser L."/>
            <person name="Kyrpides N."/>
            <person name="Mikhailova N."/>
            <person name="Nealson K."/>
            <person name="Konstantinidis K."/>
            <person name="Klappenbach J."/>
            <person name="Tiedje J."/>
            <person name="Richardson P."/>
        </authorList>
    </citation>
    <scope>NUCLEOTIDE SEQUENCE [LARGE SCALE GENOMIC DNA]</scope>
    <source>
        <strain>MR-4</strain>
    </source>
</reference>
<organism>
    <name type="scientific">Shewanella sp. (strain MR-4)</name>
    <dbReference type="NCBI Taxonomy" id="60480"/>
    <lineage>
        <taxon>Bacteria</taxon>
        <taxon>Pseudomonadati</taxon>
        <taxon>Pseudomonadota</taxon>
        <taxon>Gammaproteobacteria</taxon>
        <taxon>Alteromonadales</taxon>
        <taxon>Shewanellaceae</taxon>
        <taxon>Shewanella</taxon>
    </lineage>
</organism>
<evidence type="ECO:0000255" key="1">
    <source>
        <dbReference type="HAMAP-Rule" id="MF_01618"/>
    </source>
</evidence>
<proteinExistence type="inferred from homology"/>